<dbReference type="EC" id="6.3.4.19" evidence="1"/>
<dbReference type="EMBL" id="AE016795">
    <property type="protein sequence ID" value="AAO10279.1"/>
    <property type="molecule type" value="Genomic_DNA"/>
</dbReference>
<dbReference type="RefSeq" id="WP_011079779.1">
    <property type="nucleotide sequence ID" value="NC_004459.3"/>
</dbReference>
<dbReference type="SMR" id="Q8DBE4"/>
<dbReference type="KEGG" id="vvu:VV1_1877"/>
<dbReference type="HOGENOM" id="CLU_018869_2_0_6"/>
<dbReference type="Proteomes" id="UP000002275">
    <property type="component" value="Chromosome 1"/>
</dbReference>
<dbReference type="GO" id="GO:0005737">
    <property type="term" value="C:cytoplasm"/>
    <property type="evidence" value="ECO:0007669"/>
    <property type="project" value="UniProtKB-SubCell"/>
</dbReference>
<dbReference type="GO" id="GO:0005524">
    <property type="term" value="F:ATP binding"/>
    <property type="evidence" value="ECO:0007669"/>
    <property type="project" value="UniProtKB-UniRule"/>
</dbReference>
<dbReference type="GO" id="GO:0032267">
    <property type="term" value="F:tRNA(Ile)-lysidine synthase activity"/>
    <property type="evidence" value="ECO:0007669"/>
    <property type="project" value="UniProtKB-EC"/>
</dbReference>
<dbReference type="GO" id="GO:0006400">
    <property type="term" value="P:tRNA modification"/>
    <property type="evidence" value="ECO:0007669"/>
    <property type="project" value="UniProtKB-UniRule"/>
</dbReference>
<dbReference type="CDD" id="cd01992">
    <property type="entry name" value="TilS_N"/>
    <property type="match status" value="1"/>
</dbReference>
<dbReference type="Gene3D" id="1.20.59.20">
    <property type="match status" value="1"/>
</dbReference>
<dbReference type="Gene3D" id="3.40.50.620">
    <property type="entry name" value="HUPs"/>
    <property type="match status" value="1"/>
</dbReference>
<dbReference type="HAMAP" id="MF_01161">
    <property type="entry name" value="tRNA_Ile_lys_synt"/>
    <property type="match status" value="1"/>
</dbReference>
<dbReference type="InterPro" id="IPR012796">
    <property type="entry name" value="Lysidine-tRNA-synth_C"/>
</dbReference>
<dbReference type="InterPro" id="IPR014729">
    <property type="entry name" value="Rossmann-like_a/b/a_fold"/>
</dbReference>
<dbReference type="InterPro" id="IPR011063">
    <property type="entry name" value="TilS/TtcA_N"/>
</dbReference>
<dbReference type="InterPro" id="IPR012094">
    <property type="entry name" value="tRNA_Ile_lys_synt"/>
</dbReference>
<dbReference type="InterPro" id="IPR012795">
    <property type="entry name" value="tRNA_Ile_lys_synt_N"/>
</dbReference>
<dbReference type="InterPro" id="IPR015262">
    <property type="entry name" value="tRNA_Ile_lys_synt_subst-bd"/>
</dbReference>
<dbReference type="NCBIfam" id="TIGR02433">
    <property type="entry name" value="lysidine_TilS_C"/>
    <property type="match status" value="1"/>
</dbReference>
<dbReference type="NCBIfam" id="TIGR02432">
    <property type="entry name" value="lysidine_TilS_N"/>
    <property type="match status" value="1"/>
</dbReference>
<dbReference type="PANTHER" id="PTHR43033">
    <property type="entry name" value="TRNA(ILE)-LYSIDINE SYNTHASE-RELATED"/>
    <property type="match status" value="1"/>
</dbReference>
<dbReference type="PANTHER" id="PTHR43033:SF1">
    <property type="entry name" value="TRNA(ILE)-LYSIDINE SYNTHASE-RELATED"/>
    <property type="match status" value="1"/>
</dbReference>
<dbReference type="Pfam" id="PF01171">
    <property type="entry name" value="ATP_bind_3"/>
    <property type="match status" value="1"/>
</dbReference>
<dbReference type="Pfam" id="PF09179">
    <property type="entry name" value="TilS"/>
    <property type="match status" value="1"/>
</dbReference>
<dbReference type="Pfam" id="PF11734">
    <property type="entry name" value="TilS_C"/>
    <property type="match status" value="1"/>
</dbReference>
<dbReference type="SMART" id="SM00977">
    <property type="entry name" value="TilS_C"/>
    <property type="match status" value="1"/>
</dbReference>
<dbReference type="SUPFAM" id="SSF52402">
    <property type="entry name" value="Adenine nucleotide alpha hydrolases-like"/>
    <property type="match status" value="1"/>
</dbReference>
<dbReference type="SUPFAM" id="SSF82829">
    <property type="entry name" value="MesJ substrate recognition domain-like"/>
    <property type="match status" value="1"/>
</dbReference>
<dbReference type="SUPFAM" id="SSF56037">
    <property type="entry name" value="PheT/TilS domain"/>
    <property type="match status" value="1"/>
</dbReference>
<evidence type="ECO:0000255" key="1">
    <source>
        <dbReference type="HAMAP-Rule" id="MF_01161"/>
    </source>
</evidence>
<organism>
    <name type="scientific">Vibrio vulnificus (strain CMCP6)</name>
    <dbReference type="NCBI Taxonomy" id="216895"/>
    <lineage>
        <taxon>Bacteria</taxon>
        <taxon>Pseudomonadati</taxon>
        <taxon>Pseudomonadota</taxon>
        <taxon>Gammaproteobacteria</taxon>
        <taxon>Vibrionales</taxon>
        <taxon>Vibrionaceae</taxon>
        <taxon>Vibrio</taxon>
    </lineage>
</organism>
<keyword id="KW-0067">ATP-binding</keyword>
<keyword id="KW-0963">Cytoplasm</keyword>
<keyword id="KW-0436">Ligase</keyword>
<keyword id="KW-0547">Nucleotide-binding</keyword>
<keyword id="KW-0819">tRNA processing</keyword>
<sequence>MDALYSHFSQVLEQQRKANTRLVVAFSGGVDSRVLLELAHRYAQEHLLPCCAVHVHHGLSHNADQWVQSCAAWCQEKNIPLTVERVQLDLTQGNSIEEEARNARYQALRAHINADDLLLTGQHADDQVETFLLALKRGSGPKGLSSMAQQMPFSQGRLIRPLLDVRRQEIERCAHAIGLHWVEDESNQDTRYDRNFLRQQILPALSERWPSFAASVQRSATLCAEQEALLDELLLPVFEQLFGEDQSLAITLLSQQSELARFKLLRMWLAKLGHPMPTRHQLSLIWQQVALSQADANPILQLSQGQVRRFNQRLYLVADNQDLSAWHAPITLNTPLALPDGLGTIELTVSRGFGQIALPEQSEALWISFNPEGLSAHPAERGHSRKLKKLFQEYQVPSWLRRRTPILMYHQQVVAVAGLFVDRQFIGQDCELFWRK</sequence>
<comment type="function">
    <text evidence="1">Ligates lysine onto the cytidine present at position 34 of the AUA codon-specific tRNA(Ile) that contains the anticodon CAU, in an ATP-dependent manner. Cytidine is converted to lysidine, thus changing the amino acid specificity of the tRNA from methionine to isoleucine.</text>
</comment>
<comment type="catalytic activity">
    <reaction evidence="1">
        <text>cytidine(34) in tRNA(Ile2) + L-lysine + ATP = lysidine(34) in tRNA(Ile2) + AMP + diphosphate + H(+)</text>
        <dbReference type="Rhea" id="RHEA:43744"/>
        <dbReference type="Rhea" id="RHEA-COMP:10625"/>
        <dbReference type="Rhea" id="RHEA-COMP:10670"/>
        <dbReference type="ChEBI" id="CHEBI:15378"/>
        <dbReference type="ChEBI" id="CHEBI:30616"/>
        <dbReference type="ChEBI" id="CHEBI:32551"/>
        <dbReference type="ChEBI" id="CHEBI:33019"/>
        <dbReference type="ChEBI" id="CHEBI:82748"/>
        <dbReference type="ChEBI" id="CHEBI:83665"/>
        <dbReference type="ChEBI" id="CHEBI:456215"/>
        <dbReference type="EC" id="6.3.4.19"/>
    </reaction>
</comment>
<comment type="subcellular location">
    <subcellularLocation>
        <location evidence="1">Cytoplasm</location>
    </subcellularLocation>
</comment>
<comment type="domain">
    <text>The N-terminal region contains the highly conserved SGGXDS motif, predicted to be a P-loop motif involved in ATP binding.</text>
</comment>
<comment type="similarity">
    <text evidence="1">Belongs to the tRNA(Ile)-lysidine synthase family.</text>
</comment>
<gene>
    <name evidence="1" type="primary">tilS</name>
    <name type="ordered locus">VV1_1877</name>
</gene>
<accession>Q8DBE4</accession>
<proteinExistence type="inferred from homology"/>
<feature type="chain" id="PRO_0000181802" description="tRNA(Ile)-lysidine synthase">
    <location>
        <begin position="1"/>
        <end position="436"/>
    </location>
</feature>
<feature type="binding site" evidence="1">
    <location>
        <begin position="27"/>
        <end position="32"/>
    </location>
    <ligand>
        <name>ATP</name>
        <dbReference type="ChEBI" id="CHEBI:30616"/>
    </ligand>
</feature>
<name>TILS_VIBVU</name>
<reference key="1">
    <citation type="submission" date="2002-12" db="EMBL/GenBank/DDBJ databases">
        <title>Complete genome sequence of Vibrio vulnificus CMCP6.</title>
        <authorList>
            <person name="Rhee J.H."/>
            <person name="Kim S.Y."/>
            <person name="Chung S.S."/>
            <person name="Kim J.J."/>
            <person name="Moon Y.H."/>
            <person name="Jeong H."/>
            <person name="Choy H.E."/>
        </authorList>
    </citation>
    <scope>NUCLEOTIDE SEQUENCE [LARGE SCALE GENOMIC DNA]</scope>
    <source>
        <strain>CMCP6</strain>
    </source>
</reference>
<protein>
    <recommendedName>
        <fullName evidence="1">tRNA(Ile)-lysidine synthase</fullName>
        <ecNumber evidence="1">6.3.4.19</ecNumber>
    </recommendedName>
    <alternativeName>
        <fullName evidence="1">tRNA(Ile)-2-lysyl-cytidine synthase</fullName>
    </alternativeName>
    <alternativeName>
        <fullName evidence="1">tRNA(Ile)-lysidine synthetase</fullName>
    </alternativeName>
</protein>